<evidence type="ECO:0000255" key="1">
    <source>
        <dbReference type="HAMAP-Rule" id="MF_01341"/>
    </source>
</evidence>
<evidence type="ECO:0000256" key="2">
    <source>
        <dbReference type="SAM" id="MobiDB-lite"/>
    </source>
</evidence>
<evidence type="ECO:0000305" key="3"/>
<sequence length="148" mass="16317">MQLHNLEYKKGSRNHKEKRVGRGHGSGLGKTSGRGQDGQKARKSGMVRLAFEGGQTPLYRRVPKVGFNNDRFANKYNVVTLISLVKYETKELTVEFMYANKIAKNEDLPIKVIGNAVLPSGTVVSAHKFSKGALESISNSKAKAQILE</sequence>
<reference key="1">
    <citation type="submission" date="2008-02" db="EMBL/GenBank/DDBJ databases">
        <title>Genome sequence of Ureaplasma parvum serovar 3.</title>
        <authorList>
            <person name="Methe B.A."/>
            <person name="Glass J."/>
            <person name="Waites K."/>
            <person name="Shrivastava S."/>
        </authorList>
    </citation>
    <scope>NUCLEOTIDE SEQUENCE [LARGE SCALE GENOMIC DNA]</scope>
    <source>
        <strain>ATCC 27815 / 27 / NCTC 11736</strain>
    </source>
</reference>
<keyword id="KW-0687">Ribonucleoprotein</keyword>
<keyword id="KW-0689">Ribosomal protein</keyword>
<keyword id="KW-0694">RNA-binding</keyword>
<keyword id="KW-0699">rRNA-binding</keyword>
<feature type="chain" id="PRO_1000086738" description="Large ribosomal subunit protein uL15">
    <location>
        <begin position="1"/>
        <end position="148"/>
    </location>
</feature>
<feature type="region of interest" description="Disordered" evidence="2">
    <location>
        <begin position="1"/>
        <end position="42"/>
    </location>
</feature>
<feature type="compositionally biased region" description="Basic and acidic residues" evidence="2">
    <location>
        <begin position="1"/>
        <end position="10"/>
    </location>
</feature>
<feature type="compositionally biased region" description="Basic residues" evidence="2">
    <location>
        <begin position="11"/>
        <end position="22"/>
    </location>
</feature>
<feature type="compositionally biased region" description="Gly residues" evidence="2">
    <location>
        <begin position="23"/>
        <end position="36"/>
    </location>
</feature>
<comment type="function">
    <text evidence="1">Binds to the 23S rRNA.</text>
</comment>
<comment type="subunit">
    <text evidence="1">Part of the 50S ribosomal subunit.</text>
</comment>
<comment type="similarity">
    <text evidence="1">Belongs to the universal ribosomal protein uL15 family.</text>
</comment>
<protein>
    <recommendedName>
        <fullName evidence="1">Large ribosomal subunit protein uL15</fullName>
    </recommendedName>
    <alternativeName>
        <fullName evidence="3">50S ribosomal protein L15</fullName>
    </alternativeName>
</protein>
<accession>B1AIN8</accession>
<name>RL15_UREP2</name>
<proteinExistence type="inferred from homology"/>
<dbReference type="EMBL" id="CP000942">
    <property type="protein sequence ID" value="ACA33096.1"/>
    <property type="molecule type" value="Genomic_DNA"/>
</dbReference>
<dbReference type="RefSeq" id="WP_006688932.1">
    <property type="nucleotide sequence ID" value="NC_010503.1"/>
</dbReference>
<dbReference type="SMR" id="B1AIN8"/>
<dbReference type="GeneID" id="29672629"/>
<dbReference type="KEGG" id="upa:UPA3_0257"/>
<dbReference type="HOGENOM" id="CLU_055188_4_2_14"/>
<dbReference type="Proteomes" id="UP000002162">
    <property type="component" value="Chromosome"/>
</dbReference>
<dbReference type="GO" id="GO:0022625">
    <property type="term" value="C:cytosolic large ribosomal subunit"/>
    <property type="evidence" value="ECO:0007669"/>
    <property type="project" value="TreeGrafter"/>
</dbReference>
<dbReference type="GO" id="GO:0019843">
    <property type="term" value="F:rRNA binding"/>
    <property type="evidence" value="ECO:0007669"/>
    <property type="project" value="UniProtKB-UniRule"/>
</dbReference>
<dbReference type="GO" id="GO:0003735">
    <property type="term" value="F:structural constituent of ribosome"/>
    <property type="evidence" value="ECO:0007669"/>
    <property type="project" value="InterPro"/>
</dbReference>
<dbReference type="GO" id="GO:0006412">
    <property type="term" value="P:translation"/>
    <property type="evidence" value="ECO:0007669"/>
    <property type="project" value="UniProtKB-UniRule"/>
</dbReference>
<dbReference type="Gene3D" id="3.100.10.10">
    <property type="match status" value="1"/>
</dbReference>
<dbReference type="HAMAP" id="MF_01341">
    <property type="entry name" value="Ribosomal_uL15"/>
    <property type="match status" value="1"/>
</dbReference>
<dbReference type="InterPro" id="IPR030878">
    <property type="entry name" value="Ribosomal_uL15"/>
</dbReference>
<dbReference type="InterPro" id="IPR021131">
    <property type="entry name" value="Ribosomal_uL15/eL18"/>
</dbReference>
<dbReference type="InterPro" id="IPR036227">
    <property type="entry name" value="Ribosomal_uL15/eL18_sf"/>
</dbReference>
<dbReference type="InterPro" id="IPR005749">
    <property type="entry name" value="Ribosomal_uL15_bac-type"/>
</dbReference>
<dbReference type="NCBIfam" id="TIGR01071">
    <property type="entry name" value="rplO_bact"/>
    <property type="match status" value="1"/>
</dbReference>
<dbReference type="PANTHER" id="PTHR12934">
    <property type="entry name" value="50S RIBOSOMAL PROTEIN L15"/>
    <property type="match status" value="1"/>
</dbReference>
<dbReference type="PANTHER" id="PTHR12934:SF11">
    <property type="entry name" value="LARGE RIBOSOMAL SUBUNIT PROTEIN UL15M"/>
    <property type="match status" value="1"/>
</dbReference>
<dbReference type="Pfam" id="PF00828">
    <property type="entry name" value="Ribosomal_L27A"/>
    <property type="match status" value="1"/>
</dbReference>
<dbReference type="SUPFAM" id="SSF52080">
    <property type="entry name" value="Ribosomal proteins L15p and L18e"/>
    <property type="match status" value="1"/>
</dbReference>
<gene>
    <name evidence="1" type="primary">rplO</name>
    <name type="ordered locus">UPA3_0257</name>
</gene>
<organism>
    <name type="scientific">Ureaplasma parvum serovar 3 (strain ATCC 27815 / 27 / NCTC 11736)</name>
    <dbReference type="NCBI Taxonomy" id="505682"/>
    <lineage>
        <taxon>Bacteria</taxon>
        <taxon>Bacillati</taxon>
        <taxon>Mycoplasmatota</taxon>
        <taxon>Mycoplasmoidales</taxon>
        <taxon>Mycoplasmoidaceae</taxon>
        <taxon>Ureaplasma</taxon>
    </lineage>
</organism>